<dbReference type="EC" id="6.3.2.4" evidence="2"/>
<dbReference type="EMBL" id="AE000516">
    <property type="protein sequence ID" value="AAK47388.1"/>
    <property type="molecule type" value="Genomic_DNA"/>
</dbReference>
<dbReference type="PIR" id="B70673">
    <property type="entry name" value="B70673"/>
</dbReference>
<dbReference type="RefSeq" id="WP_003415088.1">
    <property type="nucleotide sequence ID" value="NZ_KK341227.1"/>
</dbReference>
<dbReference type="SMR" id="P9WP30"/>
<dbReference type="KEGG" id="mtc:MT3059"/>
<dbReference type="PATRIC" id="fig|83331.31.peg.3302"/>
<dbReference type="HOGENOM" id="CLU_039268_0_1_11"/>
<dbReference type="UniPathway" id="UPA00219"/>
<dbReference type="Proteomes" id="UP000001020">
    <property type="component" value="Chromosome"/>
</dbReference>
<dbReference type="GO" id="GO:0005829">
    <property type="term" value="C:cytosol"/>
    <property type="evidence" value="ECO:0007669"/>
    <property type="project" value="TreeGrafter"/>
</dbReference>
<dbReference type="GO" id="GO:0005524">
    <property type="term" value="F:ATP binding"/>
    <property type="evidence" value="ECO:0007669"/>
    <property type="project" value="UniProtKB-KW"/>
</dbReference>
<dbReference type="GO" id="GO:0008716">
    <property type="term" value="F:D-alanine-D-alanine ligase activity"/>
    <property type="evidence" value="ECO:0007669"/>
    <property type="project" value="UniProtKB-UniRule"/>
</dbReference>
<dbReference type="GO" id="GO:0046872">
    <property type="term" value="F:metal ion binding"/>
    <property type="evidence" value="ECO:0007669"/>
    <property type="project" value="UniProtKB-KW"/>
</dbReference>
<dbReference type="GO" id="GO:0071555">
    <property type="term" value="P:cell wall organization"/>
    <property type="evidence" value="ECO:0007669"/>
    <property type="project" value="UniProtKB-KW"/>
</dbReference>
<dbReference type="GO" id="GO:0009252">
    <property type="term" value="P:peptidoglycan biosynthetic process"/>
    <property type="evidence" value="ECO:0007669"/>
    <property type="project" value="UniProtKB-UniRule"/>
</dbReference>
<dbReference type="GO" id="GO:0008360">
    <property type="term" value="P:regulation of cell shape"/>
    <property type="evidence" value="ECO:0007669"/>
    <property type="project" value="UniProtKB-KW"/>
</dbReference>
<dbReference type="FunFam" id="3.30.1490.20:FF:000039">
    <property type="entry name" value="D-alanine--D-alanine ligase"/>
    <property type="match status" value="1"/>
</dbReference>
<dbReference type="FunFam" id="3.30.470.20:FF:000008">
    <property type="entry name" value="D-alanine--D-alanine ligase"/>
    <property type="match status" value="1"/>
</dbReference>
<dbReference type="Gene3D" id="3.40.50.20">
    <property type="match status" value="1"/>
</dbReference>
<dbReference type="Gene3D" id="3.30.1490.20">
    <property type="entry name" value="ATP-grasp fold, A domain"/>
    <property type="match status" value="1"/>
</dbReference>
<dbReference type="Gene3D" id="3.30.470.20">
    <property type="entry name" value="ATP-grasp fold, B domain"/>
    <property type="match status" value="1"/>
</dbReference>
<dbReference type="HAMAP" id="MF_00047">
    <property type="entry name" value="Dala_Dala_lig"/>
    <property type="match status" value="1"/>
</dbReference>
<dbReference type="InterPro" id="IPR011761">
    <property type="entry name" value="ATP-grasp"/>
</dbReference>
<dbReference type="InterPro" id="IPR013815">
    <property type="entry name" value="ATP_grasp_subdomain_1"/>
</dbReference>
<dbReference type="InterPro" id="IPR000291">
    <property type="entry name" value="D-Ala_lig_Van_CS"/>
</dbReference>
<dbReference type="InterPro" id="IPR005905">
    <property type="entry name" value="D_ala_D_ala"/>
</dbReference>
<dbReference type="InterPro" id="IPR011095">
    <property type="entry name" value="Dala_Dala_lig_C"/>
</dbReference>
<dbReference type="InterPro" id="IPR011127">
    <property type="entry name" value="Dala_Dala_lig_N"/>
</dbReference>
<dbReference type="InterPro" id="IPR016185">
    <property type="entry name" value="PreATP-grasp_dom_sf"/>
</dbReference>
<dbReference type="NCBIfam" id="TIGR01205">
    <property type="entry name" value="D_ala_D_alaTIGR"/>
    <property type="match status" value="1"/>
</dbReference>
<dbReference type="NCBIfam" id="NF002378">
    <property type="entry name" value="PRK01372.1"/>
    <property type="match status" value="1"/>
</dbReference>
<dbReference type="NCBIfam" id="NF002528">
    <property type="entry name" value="PRK01966.1-4"/>
    <property type="match status" value="1"/>
</dbReference>
<dbReference type="PANTHER" id="PTHR23132">
    <property type="entry name" value="D-ALANINE--D-ALANINE LIGASE"/>
    <property type="match status" value="1"/>
</dbReference>
<dbReference type="PANTHER" id="PTHR23132:SF25">
    <property type="entry name" value="D-ALANINE--D-ALANINE LIGASE A"/>
    <property type="match status" value="1"/>
</dbReference>
<dbReference type="Pfam" id="PF07478">
    <property type="entry name" value="Dala_Dala_lig_C"/>
    <property type="match status" value="1"/>
</dbReference>
<dbReference type="Pfam" id="PF01820">
    <property type="entry name" value="Dala_Dala_lig_N"/>
    <property type="match status" value="1"/>
</dbReference>
<dbReference type="PIRSF" id="PIRSF039102">
    <property type="entry name" value="Ddl/VanB"/>
    <property type="match status" value="1"/>
</dbReference>
<dbReference type="SUPFAM" id="SSF56059">
    <property type="entry name" value="Glutathione synthetase ATP-binding domain-like"/>
    <property type="match status" value="1"/>
</dbReference>
<dbReference type="SUPFAM" id="SSF52440">
    <property type="entry name" value="PreATP-grasp domain"/>
    <property type="match status" value="1"/>
</dbReference>
<dbReference type="PROSITE" id="PS50975">
    <property type="entry name" value="ATP_GRASP"/>
    <property type="match status" value="1"/>
</dbReference>
<dbReference type="PROSITE" id="PS00843">
    <property type="entry name" value="DALA_DALA_LIGASE_1"/>
    <property type="match status" value="1"/>
</dbReference>
<dbReference type="PROSITE" id="PS00844">
    <property type="entry name" value="DALA_DALA_LIGASE_2"/>
    <property type="match status" value="1"/>
</dbReference>
<reference key="1">
    <citation type="journal article" date="2002" name="J. Bacteriol.">
        <title>Whole-genome comparison of Mycobacterium tuberculosis clinical and laboratory strains.</title>
        <authorList>
            <person name="Fleischmann R.D."/>
            <person name="Alland D."/>
            <person name="Eisen J.A."/>
            <person name="Carpenter L."/>
            <person name="White O."/>
            <person name="Peterson J.D."/>
            <person name="DeBoy R.T."/>
            <person name="Dodson R.J."/>
            <person name="Gwinn M.L."/>
            <person name="Haft D.H."/>
            <person name="Hickey E.K."/>
            <person name="Kolonay J.F."/>
            <person name="Nelson W.C."/>
            <person name="Umayam L.A."/>
            <person name="Ermolaeva M.D."/>
            <person name="Salzberg S.L."/>
            <person name="Delcher A."/>
            <person name="Utterback T.R."/>
            <person name="Weidman J.F."/>
            <person name="Khouri H.M."/>
            <person name="Gill J."/>
            <person name="Mikula A."/>
            <person name="Bishai W."/>
            <person name="Jacobs W.R. Jr."/>
            <person name="Venter J.C."/>
            <person name="Fraser C.M."/>
        </authorList>
    </citation>
    <scope>NUCLEOTIDE SEQUENCE [LARGE SCALE GENOMIC DNA]</scope>
    <source>
        <strain>CDC 1551 / Oshkosh</strain>
    </source>
</reference>
<gene>
    <name evidence="2" type="primary">ddl</name>
    <name type="synonym">ddlA</name>
    <name type="ordered locus">MT3059</name>
</gene>
<organism>
    <name type="scientific">Mycobacterium tuberculosis (strain CDC 1551 / Oshkosh)</name>
    <dbReference type="NCBI Taxonomy" id="83331"/>
    <lineage>
        <taxon>Bacteria</taxon>
        <taxon>Bacillati</taxon>
        <taxon>Actinomycetota</taxon>
        <taxon>Actinomycetes</taxon>
        <taxon>Mycobacteriales</taxon>
        <taxon>Mycobacteriaceae</taxon>
        <taxon>Mycobacterium</taxon>
        <taxon>Mycobacterium tuberculosis complex</taxon>
    </lineage>
</organism>
<name>DDL_MYCTO</name>
<proteinExistence type="inferred from homology"/>
<comment type="function">
    <text evidence="2">Cell wall formation.</text>
</comment>
<comment type="catalytic activity">
    <reaction evidence="2">
        <text>2 D-alanine + ATP = D-alanyl-D-alanine + ADP + phosphate + H(+)</text>
        <dbReference type="Rhea" id="RHEA:11224"/>
        <dbReference type="ChEBI" id="CHEBI:15378"/>
        <dbReference type="ChEBI" id="CHEBI:30616"/>
        <dbReference type="ChEBI" id="CHEBI:43474"/>
        <dbReference type="ChEBI" id="CHEBI:57416"/>
        <dbReference type="ChEBI" id="CHEBI:57822"/>
        <dbReference type="ChEBI" id="CHEBI:456216"/>
        <dbReference type="EC" id="6.3.2.4"/>
    </reaction>
</comment>
<comment type="cofactor">
    <cofactor evidence="1">
        <name>Mg(2+)</name>
        <dbReference type="ChEBI" id="CHEBI:18420"/>
    </cofactor>
    <cofactor evidence="1">
        <name>Mn(2+)</name>
        <dbReference type="ChEBI" id="CHEBI:29035"/>
    </cofactor>
    <text evidence="1">Binds 2 magnesium or manganese ions per subunit.</text>
</comment>
<comment type="pathway">
    <text evidence="2">Cell wall biogenesis; peptidoglycan biosynthesis.</text>
</comment>
<comment type="subcellular location">
    <subcellularLocation>
        <location evidence="2">Cytoplasm</location>
    </subcellularLocation>
</comment>
<comment type="similarity">
    <text evidence="2">Belongs to the D-alanine--D-alanine ligase family.</text>
</comment>
<feature type="chain" id="PRO_0000427023" description="D-alanine--D-alanine ligase">
    <location>
        <begin position="1"/>
        <end position="373"/>
    </location>
</feature>
<feature type="domain" description="ATP-grasp" evidence="2">
    <location>
        <begin position="156"/>
        <end position="363"/>
    </location>
</feature>
<feature type="binding site" evidence="2">
    <location>
        <begin position="184"/>
        <end position="239"/>
    </location>
    <ligand>
        <name>ATP</name>
        <dbReference type="ChEBI" id="CHEBI:30616"/>
    </ligand>
</feature>
<feature type="binding site" evidence="2">
    <location>
        <position position="318"/>
    </location>
    <ligand>
        <name>Mg(2+)</name>
        <dbReference type="ChEBI" id="CHEBI:18420"/>
        <label>1</label>
    </ligand>
</feature>
<feature type="binding site" evidence="2">
    <location>
        <position position="330"/>
    </location>
    <ligand>
        <name>Mg(2+)</name>
        <dbReference type="ChEBI" id="CHEBI:18420"/>
        <label>1</label>
    </ligand>
</feature>
<feature type="binding site" evidence="2">
    <location>
        <position position="330"/>
    </location>
    <ligand>
        <name>Mg(2+)</name>
        <dbReference type="ChEBI" id="CHEBI:18420"/>
        <label>2</label>
    </ligand>
</feature>
<feature type="binding site" evidence="2">
    <location>
        <position position="332"/>
    </location>
    <ligand>
        <name>Mg(2+)</name>
        <dbReference type="ChEBI" id="CHEBI:18420"/>
        <label>2</label>
    </ligand>
</feature>
<sequence length="373" mass="39680">MSANDRRDRRVRVAVVFGGRSNEHAISCVSAGSILRNLDSRRFDVIAVGITPAGSWVLTDANPDALTITNRELPQVKSGSGTELALPADPRRGGQLVSLPPGAGEVLESVDVVFPVLHGPYGEDGTIQGLLELAGVPYVGAGVLASAVGMDKEFTKKLLAADGLPVGAYAVLRPPRSTLHRQECERLGLPVFVKPARGGSSIGVSRVSSWDQLPAAVARARRHDPKVIVEAAISGRELECGVLEMPDGTLEASTLGEIRVAGVRGREDSFYDFATKYLDDAAELDVPAKVDDQVAEAIRQLAIRAFAAIDCRGLARVDFFLTDDGPVINEINTMPGFTTISMYPRMWAASGVDYPTLLATMIETALARGVGLH</sequence>
<keyword id="KW-0067">ATP-binding</keyword>
<keyword id="KW-0133">Cell shape</keyword>
<keyword id="KW-0961">Cell wall biogenesis/degradation</keyword>
<keyword id="KW-0963">Cytoplasm</keyword>
<keyword id="KW-0436">Ligase</keyword>
<keyword id="KW-0460">Magnesium</keyword>
<keyword id="KW-0464">Manganese</keyword>
<keyword id="KW-0479">Metal-binding</keyword>
<keyword id="KW-0547">Nucleotide-binding</keyword>
<keyword id="KW-0573">Peptidoglycan synthesis</keyword>
<keyword id="KW-1185">Reference proteome</keyword>
<protein>
    <recommendedName>
        <fullName evidence="2">D-alanine--D-alanine ligase</fullName>
        <ecNumber evidence="2">6.3.2.4</ecNumber>
    </recommendedName>
    <alternativeName>
        <fullName evidence="2">D-Ala-D-Ala ligase</fullName>
    </alternativeName>
    <alternativeName>
        <fullName evidence="2">D-alanylalanine synthetase</fullName>
    </alternativeName>
</protein>
<accession>P9WP30</accession>
<accession>L0TBF6</accession>
<accession>P95114</accession>
<evidence type="ECO:0000250" key="1"/>
<evidence type="ECO:0000255" key="2">
    <source>
        <dbReference type="HAMAP-Rule" id="MF_00047"/>
    </source>
</evidence>